<proteinExistence type="inferred from homology"/>
<name>ISPT_CLOAB</name>
<protein>
    <recommendedName>
        <fullName evidence="1">Isoprenyl transferase</fullName>
        <ecNumber evidence="1">2.5.1.-</ecNumber>
    </recommendedName>
</protein>
<dbReference type="EC" id="2.5.1.-" evidence="1"/>
<dbReference type="EMBL" id="AE001437">
    <property type="protein sequence ID" value="AAK79756.1"/>
    <property type="molecule type" value="Genomic_DNA"/>
</dbReference>
<dbReference type="PIR" id="A97121">
    <property type="entry name" value="A97121"/>
</dbReference>
<dbReference type="RefSeq" id="NP_348416.1">
    <property type="nucleotide sequence ID" value="NC_003030.1"/>
</dbReference>
<dbReference type="RefSeq" id="WP_010965097.1">
    <property type="nucleotide sequence ID" value="NC_003030.1"/>
</dbReference>
<dbReference type="SMR" id="Q97I62"/>
<dbReference type="STRING" id="272562.CA_C1791"/>
<dbReference type="KEGG" id="cac:CA_C1791"/>
<dbReference type="PATRIC" id="fig|272562.8.peg.1997"/>
<dbReference type="eggNOG" id="COG0020">
    <property type="taxonomic scope" value="Bacteria"/>
</dbReference>
<dbReference type="HOGENOM" id="CLU_038505_1_1_9"/>
<dbReference type="OrthoDB" id="4191603at2"/>
<dbReference type="Proteomes" id="UP000000814">
    <property type="component" value="Chromosome"/>
</dbReference>
<dbReference type="GO" id="GO:0005829">
    <property type="term" value="C:cytosol"/>
    <property type="evidence" value="ECO:0007669"/>
    <property type="project" value="TreeGrafter"/>
</dbReference>
<dbReference type="GO" id="GO:0008834">
    <property type="term" value="F:ditrans,polycis-undecaprenyl-diphosphate synthase [(2E,6E)-farnesyl-diphosphate specific] activity"/>
    <property type="evidence" value="ECO:0007669"/>
    <property type="project" value="TreeGrafter"/>
</dbReference>
<dbReference type="GO" id="GO:0000287">
    <property type="term" value="F:magnesium ion binding"/>
    <property type="evidence" value="ECO:0007669"/>
    <property type="project" value="UniProtKB-UniRule"/>
</dbReference>
<dbReference type="GO" id="GO:0030145">
    <property type="term" value="F:manganese ion binding"/>
    <property type="evidence" value="ECO:0007669"/>
    <property type="project" value="TreeGrafter"/>
</dbReference>
<dbReference type="GO" id="GO:0016094">
    <property type="term" value="P:polyprenol biosynthetic process"/>
    <property type="evidence" value="ECO:0007669"/>
    <property type="project" value="TreeGrafter"/>
</dbReference>
<dbReference type="CDD" id="cd00475">
    <property type="entry name" value="Cis_IPPS"/>
    <property type="match status" value="1"/>
</dbReference>
<dbReference type="FunFam" id="3.40.1180.10:FF:000001">
    <property type="entry name" value="(2E,6E)-farnesyl-diphosphate-specific ditrans,polycis-undecaprenyl-diphosphate synthase"/>
    <property type="match status" value="1"/>
</dbReference>
<dbReference type="Gene3D" id="3.40.1180.10">
    <property type="entry name" value="Decaprenyl diphosphate synthase-like"/>
    <property type="match status" value="1"/>
</dbReference>
<dbReference type="HAMAP" id="MF_01139">
    <property type="entry name" value="ISPT"/>
    <property type="match status" value="1"/>
</dbReference>
<dbReference type="InterPro" id="IPR001441">
    <property type="entry name" value="UPP_synth-like"/>
</dbReference>
<dbReference type="InterPro" id="IPR018520">
    <property type="entry name" value="UPP_synth-like_CS"/>
</dbReference>
<dbReference type="InterPro" id="IPR036424">
    <property type="entry name" value="UPP_synth-like_sf"/>
</dbReference>
<dbReference type="NCBIfam" id="NF011405">
    <property type="entry name" value="PRK14830.1"/>
    <property type="match status" value="1"/>
</dbReference>
<dbReference type="NCBIfam" id="TIGR00055">
    <property type="entry name" value="uppS"/>
    <property type="match status" value="1"/>
</dbReference>
<dbReference type="PANTHER" id="PTHR10291:SF0">
    <property type="entry name" value="DEHYDRODOLICHYL DIPHOSPHATE SYNTHASE 2"/>
    <property type="match status" value="1"/>
</dbReference>
<dbReference type="PANTHER" id="PTHR10291">
    <property type="entry name" value="DEHYDRODOLICHYL DIPHOSPHATE SYNTHASE FAMILY MEMBER"/>
    <property type="match status" value="1"/>
</dbReference>
<dbReference type="Pfam" id="PF01255">
    <property type="entry name" value="Prenyltransf"/>
    <property type="match status" value="1"/>
</dbReference>
<dbReference type="SUPFAM" id="SSF64005">
    <property type="entry name" value="Undecaprenyl diphosphate synthase"/>
    <property type="match status" value="1"/>
</dbReference>
<dbReference type="PROSITE" id="PS01066">
    <property type="entry name" value="UPP_SYNTHASE"/>
    <property type="match status" value="1"/>
</dbReference>
<keyword id="KW-0460">Magnesium</keyword>
<keyword id="KW-0479">Metal-binding</keyword>
<keyword id="KW-1185">Reference proteome</keyword>
<keyword id="KW-0808">Transferase</keyword>
<reference key="1">
    <citation type="journal article" date="2001" name="J. Bacteriol.">
        <title>Genome sequence and comparative analysis of the solvent-producing bacterium Clostridium acetobutylicum.</title>
        <authorList>
            <person name="Noelling J."/>
            <person name="Breton G."/>
            <person name="Omelchenko M.V."/>
            <person name="Makarova K.S."/>
            <person name="Zeng Q."/>
            <person name="Gibson R."/>
            <person name="Lee H.M."/>
            <person name="Dubois J."/>
            <person name="Qiu D."/>
            <person name="Hitti J."/>
            <person name="Wolf Y.I."/>
            <person name="Tatusov R.L."/>
            <person name="Sabathe F."/>
            <person name="Doucette-Stamm L.A."/>
            <person name="Soucaille P."/>
            <person name="Daly M.J."/>
            <person name="Bennett G.N."/>
            <person name="Koonin E.V."/>
            <person name="Smith D.R."/>
        </authorList>
    </citation>
    <scope>NUCLEOTIDE SEQUENCE [LARGE SCALE GENOMIC DNA]</scope>
    <source>
        <strain>ATCC 824 / DSM 792 / JCM 1419 / IAM 19013 / LMG 5710 / NBRC 13948 / NRRL B-527 / VKM B-1787 / 2291 / W</strain>
    </source>
</reference>
<evidence type="ECO:0000255" key="1">
    <source>
        <dbReference type="HAMAP-Rule" id="MF_01139"/>
    </source>
</evidence>
<gene>
    <name evidence="1" type="primary">uppS</name>
    <name type="ordered locus">CA_C1791</name>
</gene>
<accession>Q97I62</accession>
<comment type="function">
    <text evidence="1">Catalyzes the condensation of isopentenyl diphosphate (IPP) with allylic pyrophosphates generating different type of terpenoids.</text>
</comment>
<comment type="cofactor">
    <cofactor evidence="1">
        <name>Mg(2+)</name>
        <dbReference type="ChEBI" id="CHEBI:18420"/>
    </cofactor>
    <text evidence="1">Binds 2 magnesium ions per subunit.</text>
</comment>
<comment type="subunit">
    <text evidence="1">Homodimer.</text>
</comment>
<comment type="similarity">
    <text evidence="1">Belongs to the UPP synthase family.</text>
</comment>
<organism>
    <name type="scientific">Clostridium acetobutylicum (strain ATCC 824 / DSM 792 / JCM 1419 / IAM 19013 / LMG 5710 / NBRC 13948 / NRRL B-527 / VKM B-1787 / 2291 / W)</name>
    <dbReference type="NCBI Taxonomy" id="272562"/>
    <lineage>
        <taxon>Bacteria</taxon>
        <taxon>Bacillati</taxon>
        <taxon>Bacillota</taxon>
        <taxon>Clostridia</taxon>
        <taxon>Eubacteriales</taxon>
        <taxon>Clostridiaceae</taxon>
        <taxon>Clostridium</taxon>
    </lineage>
</organism>
<feature type="chain" id="PRO_0000123598" description="Isoprenyl transferase">
    <location>
        <begin position="1"/>
        <end position="257"/>
    </location>
</feature>
<feature type="active site" evidence="1">
    <location>
        <position position="33"/>
    </location>
</feature>
<feature type="active site" description="Proton acceptor" evidence="1">
    <location>
        <position position="81"/>
    </location>
</feature>
<feature type="binding site" evidence="1">
    <location>
        <position position="33"/>
    </location>
    <ligand>
        <name>Mg(2+)</name>
        <dbReference type="ChEBI" id="CHEBI:18420"/>
    </ligand>
</feature>
<feature type="binding site" evidence="1">
    <location>
        <begin position="34"/>
        <end position="37"/>
    </location>
    <ligand>
        <name>substrate</name>
    </ligand>
</feature>
<feature type="binding site" evidence="1">
    <location>
        <position position="38"/>
    </location>
    <ligand>
        <name>substrate</name>
    </ligand>
</feature>
<feature type="binding site" evidence="1">
    <location>
        <position position="46"/>
    </location>
    <ligand>
        <name>substrate</name>
    </ligand>
</feature>
<feature type="binding site" evidence="1">
    <location>
        <position position="50"/>
    </location>
    <ligand>
        <name>substrate</name>
    </ligand>
</feature>
<feature type="binding site" evidence="1">
    <location>
        <begin position="78"/>
        <end position="80"/>
    </location>
    <ligand>
        <name>substrate</name>
    </ligand>
</feature>
<feature type="binding site" evidence="1">
    <location>
        <position position="82"/>
    </location>
    <ligand>
        <name>substrate</name>
    </ligand>
</feature>
<feature type="binding site" evidence="1">
    <location>
        <position position="84"/>
    </location>
    <ligand>
        <name>substrate</name>
    </ligand>
</feature>
<feature type="binding site" evidence="1">
    <location>
        <position position="204"/>
    </location>
    <ligand>
        <name>substrate</name>
    </ligand>
</feature>
<feature type="binding site" evidence="1">
    <location>
        <begin position="210"/>
        <end position="212"/>
    </location>
    <ligand>
        <name>substrate</name>
    </ligand>
</feature>
<feature type="binding site" evidence="1">
    <location>
        <position position="223"/>
    </location>
    <ligand>
        <name>Mg(2+)</name>
        <dbReference type="ChEBI" id="CHEBI:18420"/>
    </ligand>
</feature>
<sequence>MLNFIRSDKDKGKGNDNDINFSNIPKHIAIIMDGNGRWAKKRNLPRTMGHKAGGEALKRIVRECSDIGVKYLTVYGFSTENWIRPKEEVNAIMRLIVEFLKREFNELNKNNVIINPIGNILGLPEACITALNDAKNKTKNNTGLMLNLALNYGGRDEILNAVKNIFASYEENKISKDEIFNLSDEEFSSYLYTGCIPDPDIIIRPSGEKRLSNFLLWQCAYSEFWYSNINWPDFSIEDLHTAIKDYQNRDRRFGGVK</sequence>